<gene>
    <name evidence="1" type="primary">Mat89Ba</name>
    <name type="ORF">GJ23506</name>
</gene>
<proteinExistence type="inferred from homology"/>
<accession>B4LWT7</accession>
<organism>
    <name type="scientific">Drosophila virilis</name>
    <name type="common">Fruit fly</name>
    <dbReference type="NCBI Taxonomy" id="7244"/>
    <lineage>
        <taxon>Eukaryota</taxon>
        <taxon>Metazoa</taxon>
        <taxon>Ecdysozoa</taxon>
        <taxon>Arthropoda</taxon>
        <taxon>Hexapoda</taxon>
        <taxon>Insecta</taxon>
        <taxon>Pterygota</taxon>
        <taxon>Neoptera</taxon>
        <taxon>Endopterygota</taxon>
        <taxon>Diptera</taxon>
        <taxon>Brachycera</taxon>
        <taxon>Muscomorpha</taxon>
        <taxon>Ephydroidea</taxon>
        <taxon>Drosophilidae</taxon>
        <taxon>Drosophila</taxon>
    </lineage>
</organism>
<comment type="function">
    <text evidence="3">Part of the small subunit (SSU) processome, first precursor of the small eukaryotic ribosomal subunit. During the assembly of the SSU processome in the nucleolus, many ribosome biogenesis factors, an RNA chaperone and ribosomal proteins associate with the nascent pre-rRNA and work in concert to generate RNA folding, modifications, rearrangements and cleavage as well as targeted degradation of pre-ribosomal RNA by the RNA exosome.</text>
</comment>
<comment type="subunit">
    <text evidence="3">Part of the small subunit (SSU) processome, composed of more than 70 proteins and the RNA chaperone small nucleolar RNA (snoRNA) U3.</text>
</comment>
<comment type="subcellular location">
    <subcellularLocation>
        <location evidence="3">Nucleus</location>
        <location evidence="3">Nucleolus</location>
    </subcellularLocation>
    <subcellularLocation>
        <location evidence="2">Chromosome</location>
    </subcellularLocation>
    <text evidence="2">Localizes to condensed chromosomes in mitosis.</text>
</comment>
<comment type="similarity">
    <text evidence="4">Belongs to the NRAP family.</text>
</comment>
<sequence>MGRIKEKESKAPSLSESHTDYEYAATAATSSDDGFDEPNRVPVHKRKVQLTNGEAKKKKFKHADSNVKPPTLEEIKEIRDTRNLFHSNLFKLQVKEMLEEIQLKPKYSNYIETWIETFTITVQELKDGLLDTCELEVPLHLHKKSFNFQFLTPTSEPKLIGAAATGTLLGPKIVVDVALEMPAACFQHDDYRNLIYDQKRALYLATVASKIKQSPAFKADQFAYNYHANNPLKPVLELTPASKLGKYLLLRVYITAQSEIFKLSRFLPWTNNIRPSVFGDKWNEAETLPATQHYNANVLFDLTLAENQKLLLSTFTGRRNFQEGLLLLKVWLRQRQLDVGFSGFSAHILAAYIAYLKQQRLLHQSSSSYQIARTVWNQLANSDWTQGITLSQHQPHQLITLAGYYDVCFMDVTGYYNLCANLPLAVYKAVCAEAKLAVELLNDVKVNSFSHIFMQTSPLYTRMDNILKITNPASVDQLLQLHVQPHVKYDYANYAHPQLLKLLTDLLQKGLGQRVHAILPLEVPCSPWTVDTKAPVIGRSLTLGLILDPEHAHEVLDKGPATNEDANGAAEFRKFWGNKSNLRRFQDGSITEAVVWATATDAPSQKRLIVRQIVLYLLEHQLQLEPSEVQYIAGNLDVVYSLTPSFKVAKLQTKLKIQQETDAEALTPNVIHCYDALARQLHSLGDLPLDIVSISGISPVFRYCEPQPLLPQARLVSDRIHAGQVLRVIIQLGPSGKWPSDLGALRSLKTAFLIQIGQQLKEQHHLHWHLCKDGLLVLKQGYCFLLELAHSKELALLKQQQTERGVTTYVDNPASRELERRHYILPRVSGALHALHQMHGAFGPTVLIAKRWLAAQLLDDGLWPSIATELLVAHLFQQRQTPHTTVSPQTGFIRFLQLLAHSDWSGELFLLNFNNSWTEQQITDLEHSYRSERDSYPSLCLATAYDQQHAGRLWTSNNSPSKPVLGRVTLLARHALQLIESSLLSPKLAFVRPAQLFMASGDGYDLVIQLKPDLLSNTLCYDLGSPFLPFSQRNFRLPLAGCDQLAKVVQQLRDAYSEYAAFFYNPHGGKELAIVWRPASEFAPKPFKVNELQACTPCVGGKVQVDRDTLVEDFKLLLKDFYLRVCTPQELKREQREHNKPKRYFNGQGESEPDKPQKKKKKASTIPTNAKKRLMKSKSMNALC</sequence>
<reference evidence="6" key="1">
    <citation type="journal article" date="2007" name="Nature">
        <title>Evolution of genes and genomes on the Drosophila phylogeny.</title>
        <authorList>
            <consortium name="Drosophila 12 genomes consortium"/>
        </authorList>
    </citation>
    <scope>NUCLEOTIDE SEQUENCE [LARGE SCALE GENOMIC DNA]</scope>
    <source>
        <strain evidence="6">Tucson 15010-1051.87</strain>
    </source>
</reference>
<keyword id="KW-0158">Chromosome</keyword>
<keyword id="KW-0539">Nucleus</keyword>
<keyword id="KW-1185">Reference proteome</keyword>
<keyword id="KW-0694">RNA-binding</keyword>
<evidence type="ECO:0000250" key="1">
    <source>
        <dbReference type="UniProtKB" id="Q8IH00"/>
    </source>
</evidence>
<evidence type="ECO:0000250" key="2">
    <source>
        <dbReference type="UniProtKB" id="Q8R5K4"/>
    </source>
</evidence>
<evidence type="ECO:0000250" key="3">
    <source>
        <dbReference type="UniProtKB" id="Q9H6R4"/>
    </source>
</evidence>
<evidence type="ECO:0000255" key="4"/>
<evidence type="ECO:0000256" key="5">
    <source>
        <dbReference type="SAM" id="MobiDB-lite"/>
    </source>
</evidence>
<evidence type="ECO:0000312" key="6">
    <source>
        <dbReference type="EMBL" id="EDW66658.1"/>
    </source>
</evidence>
<protein>
    <recommendedName>
        <fullName evidence="3">Nucleolar protein 6</fullName>
    </recommendedName>
    <alternativeName>
        <fullName evidence="1">Maternal transcript 89Ba</fullName>
    </alternativeName>
</protein>
<dbReference type="EMBL" id="CH940650">
    <property type="protein sequence ID" value="EDW66658.1"/>
    <property type="molecule type" value="Genomic_DNA"/>
</dbReference>
<dbReference type="RefSeq" id="XP_002053138.1">
    <property type="nucleotide sequence ID" value="XM_002053102.4"/>
</dbReference>
<dbReference type="SMR" id="B4LWT7"/>
<dbReference type="FunCoup" id="B4LWT7">
    <property type="interactions" value="1608"/>
</dbReference>
<dbReference type="STRING" id="7244.B4LWT7"/>
<dbReference type="EnsemblMetazoa" id="FBtr0239431">
    <property type="protein sequence ID" value="FBpp0237923"/>
    <property type="gene ID" value="FBgn0210604"/>
</dbReference>
<dbReference type="EnsemblMetazoa" id="XM_002053102.3">
    <property type="protein sequence ID" value="XP_002053138.1"/>
    <property type="gene ID" value="LOC6630892"/>
</dbReference>
<dbReference type="GeneID" id="6630892"/>
<dbReference type="KEGG" id="dvi:6630892"/>
<dbReference type="CTD" id="41973"/>
<dbReference type="eggNOG" id="KOG2054">
    <property type="taxonomic scope" value="Eukaryota"/>
</dbReference>
<dbReference type="HOGENOM" id="CLU_003502_0_1_1"/>
<dbReference type="InParanoid" id="B4LWT7"/>
<dbReference type="OMA" id="NPHGGKE"/>
<dbReference type="OrthoDB" id="10251401at2759"/>
<dbReference type="PhylomeDB" id="B4LWT7"/>
<dbReference type="Proteomes" id="UP000008792">
    <property type="component" value="Unassembled WGS sequence"/>
</dbReference>
<dbReference type="GO" id="GO:0000794">
    <property type="term" value="C:condensed nuclear chromosome"/>
    <property type="evidence" value="ECO:0000250"/>
    <property type="project" value="UniProtKB"/>
</dbReference>
<dbReference type="GO" id="GO:0032545">
    <property type="term" value="C:CURI complex"/>
    <property type="evidence" value="ECO:0007669"/>
    <property type="project" value="TreeGrafter"/>
</dbReference>
<dbReference type="GO" id="GO:0032040">
    <property type="term" value="C:small-subunit processome"/>
    <property type="evidence" value="ECO:0000250"/>
    <property type="project" value="UniProtKB"/>
</dbReference>
<dbReference type="GO" id="GO:0034456">
    <property type="term" value="C:UTP-C complex"/>
    <property type="evidence" value="ECO:0007669"/>
    <property type="project" value="TreeGrafter"/>
</dbReference>
<dbReference type="GO" id="GO:0003723">
    <property type="term" value="F:RNA binding"/>
    <property type="evidence" value="ECO:0007669"/>
    <property type="project" value="UniProtKB-KW"/>
</dbReference>
<dbReference type="GO" id="GO:0042274">
    <property type="term" value="P:ribosomal small subunit biogenesis"/>
    <property type="evidence" value="ECO:0000250"/>
    <property type="project" value="UniProtKB"/>
</dbReference>
<dbReference type="GO" id="GO:0006364">
    <property type="term" value="P:rRNA processing"/>
    <property type="evidence" value="ECO:0007669"/>
    <property type="project" value="TreeGrafter"/>
</dbReference>
<dbReference type="GO" id="GO:0006409">
    <property type="term" value="P:tRNA export from nucleus"/>
    <property type="evidence" value="ECO:0007669"/>
    <property type="project" value="TreeGrafter"/>
</dbReference>
<dbReference type="FunFam" id="1.10.1410.10:FF:000005">
    <property type="entry name" value="Nucleolar protein 6"/>
    <property type="match status" value="1"/>
</dbReference>
<dbReference type="FunFam" id="1.10.1410.10:FF:000006">
    <property type="entry name" value="Nucleolar protein 6"/>
    <property type="match status" value="1"/>
</dbReference>
<dbReference type="FunFam" id="3.30.70.3030:FF:000008">
    <property type="entry name" value="Nucleolar protein 6"/>
    <property type="match status" value="1"/>
</dbReference>
<dbReference type="Gene3D" id="1.10.1410.10">
    <property type="match status" value="2"/>
</dbReference>
<dbReference type="Gene3D" id="3.30.70.3030">
    <property type="match status" value="1"/>
</dbReference>
<dbReference type="InterPro" id="IPR005554">
    <property type="entry name" value="NOL6/Upt22"/>
</dbReference>
<dbReference type="InterPro" id="IPR035082">
    <property type="entry name" value="Nrap_D1"/>
</dbReference>
<dbReference type="InterPro" id="IPR035367">
    <property type="entry name" value="Nrap_D2"/>
</dbReference>
<dbReference type="InterPro" id="IPR035368">
    <property type="entry name" value="Nrap_D3"/>
</dbReference>
<dbReference type="InterPro" id="IPR035369">
    <property type="entry name" value="Nrap_D4"/>
</dbReference>
<dbReference type="InterPro" id="IPR035370">
    <property type="entry name" value="Nrap_D5"/>
</dbReference>
<dbReference type="InterPro" id="IPR035371">
    <property type="entry name" value="Nrap_D6"/>
</dbReference>
<dbReference type="PANTHER" id="PTHR17972:SF0">
    <property type="entry name" value="NUCLEOLAR PROTEIN 6"/>
    <property type="match status" value="1"/>
</dbReference>
<dbReference type="PANTHER" id="PTHR17972">
    <property type="entry name" value="NUCLEOLAR RNA-ASSOCIATED PROTEIN"/>
    <property type="match status" value="1"/>
</dbReference>
<dbReference type="Pfam" id="PF03813">
    <property type="entry name" value="Nrap"/>
    <property type="match status" value="1"/>
</dbReference>
<dbReference type="Pfam" id="PF17403">
    <property type="entry name" value="Nrap_D2"/>
    <property type="match status" value="1"/>
</dbReference>
<dbReference type="Pfam" id="PF17404">
    <property type="entry name" value="Nrap_D3"/>
    <property type="match status" value="1"/>
</dbReference>
<dbReference type="Pfam" id="PF17405">
    <property type="entry name" value="Nrap_D4"/>
    <property type="match status" value="1"/>
</dbReference>
<dbReference type="Pfam" id="PF17406">
    <property type="entry name" value="Nrap_D5"/>
    <property type="match status" value="1"/>
</dbReference>
<dbReference type="Pfam" id="PF17407">
    <property type="entry name" value="Nrap_D6"/>
    <property type="match status" value="1"/>
</dbReference>
<feature type="chain" id="PRO_0000383630" description="Nucleolar protein 6">
    <location>
        <begin position="1"/>
        <end position="1184"/>
    </location>
</feature>
<feature type="region of interest" description="Disordered" evidence="5">
    <location>
        <begin position="1"/>
        <end position="42"/>
    </location>
</feature>
<feature type="region of interest" description="Disordered" evidence="5">
    <location>
        <begin position="1133"/>
        <end position="1184"/>
    </location>
</feature>
<feature type="compositionally biased region" description="Basic and acidic residues" evidence="5">
    <location>
        <begin position="1"/>
        <end position="10"/>
    </location>
</feature>
<name>NOL6_DROVI</name>